<feature type="chain" id="PRO_0000136838" description="Small ribosomal subunit protein eS28">
    <location>
        <begin position="1"/>
        <end position="67"/>
    </location>
</feature>
<feature type="strand" evidence="2">
    <location>
        <begin position="8"/>
        <end position="23"/>
    </location>
</feature>
<feature type="strand" evidence="2">
    <location>
        <begin position="25"/>
        <end position="35"/>
    </location>
</feature>
<feature type="strand" evidence="2">
    <location>
        <begin position="39"/>
        <end position="46"/>
    </location>
</feature>
<feature type="strand" evidence="2">
    <location>
        <begin position="53"/>
        <end position="57"/>
    </location>
</feature>
<accession>P33285</accession>
<keyword id="KW-0002">3D-structure</keyword>
<keyword id="KW-1185">Reference proteome</keyword>
<keyword id="KW-0687">Ribonucleoprotein</keyword>
<keyword id="KW-0689">Ribosomal protein</keyword>
<proteinExistence type="evidence at protein level"/>
<comment type="similarity">
    <text evidence="1">Belongs to the eukaryotic ribosomal protein eS28 family.</text>
</comment>
<gene>
    <name type="primary">RPS28</name>
    <name type="ordered locus">KLLA0F20383g</name>
</gene>
<dbReference type="EMBL" id="X69582">
    <property type="protein sequence ID" value="CAA49296.1"/>
    <property type="molecule type" value="mRNA"/>
</dbReference>
<dbReference type="EMBL" id="CR382126">
    <property type="protein sequence ID" value="CAG98703.1"/>
    <property type="molecule type" value="Genomic_DNA"/>
</dbReference>
<dbReference type="PIR" id="S30005">
    <property type="entry name" value="S30005"/>
</dbReference>
<dbReference type="RefSeq" id="XP_455995.1">
    <property type="nucleotide sequence ID" value="XM_455995.1"/>
</dbReference>
<dbReference type="PDB" id="3J80">
    <property type="method" value="EM"/>
    <property type="resolution" value="3.75 A"/>
    <property type="chains" value="c=1-67"/>
</dbReference>
<dbReference type="PDB" id="3J81">
    <property type="method" value="EM"/>
    <property type="resolution" value="4.00 A"/>
    <property type="chains" value="c=1-67"/>
</dbReference>
<dbReference type="PDB" id="3JAM">
    <property type="method" value="EM"/>
    <property type="resolution" value="3.46 A"/>
    <property type="chains" value="c=1-67"/>
</dbReference>
<dbReference type="PDB" id="3JAP">
    <property type="method" value="EM"/>
    <property type="resolution" value="4.90 A"/>
    <property type="chains" value="c=1-67"/>
</dbReference>
<dbReference type="PDB" id="5IT7">
    <property type="method" value="EM"/>
    <property type="resolution" value="3.60 A"/>
    <property type="chains" value="c=5-67"/>
</dbReference>
<dbReference type="PDB" id="5IT9">
    <property type="method" value="EM"/>
    <property type="resolution" value="3.80 A"/>
    <property type="chains" value="c=5-67"/>
</dbReference>
<dbReference type="PDB" id="6FYX">
    <property type="method" value="EM"/>
    <property type="resolution" value="3.05 A"/>
    <property type="chains" value="c=1-67"/>
</dbReference>
<dbReference type="PDB" id="6FYY">
    <property type="method" value="EM"/>
    <property type="resolution" value="3.05 A"/>
    <property type="chains" value="c=1-67"/>
</dbReference>
<dbReference type="PDB" id="6GSM">
    <property type="method" value="EM"/>
    <property type="resolution" value="5.15 A"/>
    <property type="chains" value="c=6-67"/>
</dbReference>
<dbReference type="PDB" id="6GSN">
    <property type="method" value="EM"/>
    <property type="resolution" value="5.75 A"/>
    <property type="chains" value="c=6-67"/>
</dbReference>
<dbReference type="PDB" id="6UZ7">
    <property type="method" value="EM"/>
    <property type="resolution" value="3.60 A"/>
    <property type="chains" value="c=1-67"/>
</dbReference>
<dbReference type="PDB" id="8I7J">
    <property type="method" value="EM"/>
    <property type="resolution" value="4.60 A"/>
    <property type="chains" value="c=1-67"/>
</dbReference>
<dbReference type="PDB" id="8RW1">
    <property type="method" value="EM"/>
    <property type="resolution" value="3.35 A"/>
    <property type="chains" value="c=1-67"/>
</dbReference>
<dbReference type="PDB" id="8S8D">
    <property type="method" value="EM"/>
    <property type="resolution" value="3.45 A"/>
    <property type="chains" value="c=1-67"/>
</dbReference>
<dbReference type="PDB" id="8S8E">
    <property type="method" value="EM"/>
    <property type="resolution" value="3.85 A"/>
    <property type="chains" value="c=1-67"/>
</dbReference>
<dbReference type="PDB" id="8S8F">
    <property type="method" value="EM"/>
    <property type="resolution" value="3.95 A"/>
    <property type="chains" value="c=1-67"/>
</dbReference>
<dbReference type="PDB" id="8S8G">
    <property type="method" value="EM"/>
    <property type="resolution" value="4.00 A"/>
    <property type="chains" value="c=1-67"/>
</dbReference>
<dbReference type="PDB" id="8S8H">
    <property type="method" value="EM"/>
    <property type="resolution" value="4.00 A"/>
    <property type="chains" value="c=1-67"/>
</dbReference>
<dbReference type="PDB" id="8S8I">
    <property type="method" value="EM"/>
    <property type="resolution" value="4.30 A"/>
    <property type="chains" value="c=1-67"/>
</dbReference>
<dbReference type="PDB" id="8S8J">
    <property type="method" value="EM"/>
    <property type="resolution" value="4.70 A"/>
    <property type="chains" value="c=1-67"/>
</dbReference>
<dbReference type="PDB" id="8S8K">
    <property type="method" value="EM"/>
    <property type="resolution" value="4.00 A"/>
    <property type="chains" value="c=1-67"/>
</dbReference>
<dbReference type="PDBsum" id="3J80"/>
<dbReference type="PDBsum" id="3J81"/>
<dbReference type="PDBsum" id="3JAM"/>
<dbReference type="PDBsum" id="3JAP"/>
<dbReference type="PDBsum" id="5IT7"/>
<dbReference type="PDBsum" id="5IT9"/>
<dbReference type="PDBsum" id="6FYX"/>
<dbReference type="PDBsum" id="6FYY"/>
<dbReference type="PDBsum" id="6GSM"/>
<dbReference type="PDBsum" id="6GSN"/>
<dbReference type="PDBsum" id="6UZ7"/>
<dbReference type="PDBsum" id="8I7J"/>
<dbReference type="PDBsum" id="8RW1"/>
<dbReference type="PDBsum" id="8S8D"/>
<dbReference type="PDBsum" id="8S8E"/>
<dbReference type="PDBsum" id="8S8F"/>
<dbReference type="PDBsum" id="8S8G"/>
<dbReference type="PDBsum" id="8S8H"/>
<dbReference type="PDBsum" id="8S8I"/>
<dbReference type="PDBsum" id="8S8J"/>
<dbReference type="PDBsum" id="8S8K"/>
<dbReference type="EMDB" id="EMD-0057"/>
<dbReference type="EMDB" id="EMD-0058"/>
<dbReference type="EMDB" id="EMD-19541"/>
<dbReference type="EMDB" id="EMD-19801"/>
<dbReference type="EMDB" id="EMD-19802"/>
<dbReference type="EMDB" id="EMD-19803"/>
<dbReference type="EMDB" id="EMD-19804"/>
<dbReference type="EMDB" id="EMD-19805"/>
<dbReference type="EMDB" id="EMD-19806"/>
<dbReference type="EMDB" id="EMD-19807"/>
<dbReference type="EMDB" id="EMD-19808"/>
<dbReference type="EMDB" id="EMD-20952"/>
<dbReference type="EMDB" id="EMD-35216"/>
<dbReference type="EMDB" id="EMD-4327"/>
<dbReference type="EMDB" id="EMD-4328"/>
<dbReference type="EMDB" id="EMD-8123"/>
<dbReference type="EMDB" id="EMD-8124"/>
<dbReference type="SMR" id="P33285"/>
<dbReference type="FunCoup" id="P33285">
    <property type="interactions" value="955"/>
</dbReference>
<dbReference type="STRING" id="284590.P33285"/>
<dbReference type="PaxDb" id="284590-P33285"/>
<dbReference type="KEGG" id="kla:KLLA0_F20383g"/>
<dbReference type="eggNOG" id="KOG3502">
    <property type="taxonomic scope" value="Eukaryota"/>
</dbReference>
<dbReference type="HOGENOM" id="CLU_178987_1_0_1"/>
<dbReference type="InParanoid" id="P33285"/>
<dbReference type="OMA" id="NTGMHGE"/>
<dbReference type="EvolutionaryTrace" id="P33285"/>
<dbReference type="Proteomes" id="UP000000598">
    <property type="component" value="Chromosome F"/>
</dbReference>
<dbReference type="GO" id="GO:0022627">
    <property type="term" value="C:cytosolic small ribosomal subunit"/>
    <property type="evidence" value="ECO:0007669"/>
    <property type="project" value="TreeGrafter"/>
</dbReference>
<dbReference type="GO" id="GO:0003735">
    <property type="term" value="F:structural constituent of ribosome"/>
    <property type="evidence" value="ECO:0007669"/>
    <property type="project" value="InterPro"/>
</dbReference>
<dbReference type="GO" id="GO:0030490">
    <property type="term" value="P:maturation of SSU-rRNA"/>
    <property type="evidence" value="ECO:0007669"/>
    <property type="project" value="TreeGrafter"/>
</dbReference>
<dbReference type="GO" id="GO:0000028">
    <property type="term" value="P:ribosomal small subunit assembly"/>
    <property type="evidence" value="ECO:0007669"/>
    <property type="project" value="TreeGrafter"/>
</dbReference>
<dbReference type="GO" id="GO:0006412">
    <property type="term" value="P:translation"/>
    <property type="evidence" value="ECO:0007669"/>
    <property type="project" value="InterPro"/>
</dbReference>
<dbReference type="CDD" id="cd04457">
    <property type="entry name" value="S1_S28E"/>
    <property type="match status" value="1"/>
</dbReference>
<dbReference type="FunFam" id="2.40.50.140:FF:000025">
    <property type="entry name" value="40S ribosomal protein S28"/>
    <property type="match status" value="1"/>
</dbReference>
<dbReference type="Gene3D" id="2.40.50.140">
    <property type="entry name" value="Nucleic acid-binding proteins"/>
    <property type="match status" value="1"/>
</dbReference>
<dbReference type="HAMAP" id="MF_00292">
    <property type="entry name" value="Ribosomal_eS28"/>
    <property type="match status" value="1"/>
</dbReference>
<dbReference type="InterPro" id="IPR012340">
    <property type="entry name" value="NA-bd_OB-fold"/>
</dbReference>
<dbReference type="InterPro" id="IPR000289">
    <property type="entry name" value="Ribosomal_eS28"/>
</dbReference>
<dbReference type="InterPro" id="IPR028626">
    <property type="entry name" value="Ribosomal_eS28_CS"/>
</dbReference>
<dbReference type="PANTHER" id="PTHR10769">
    <property type="entry name" value="40S RIBOSOMAL PROTEIN S28"/>
    <property type="match status" value="1"/>
</dbReference>
<dbReference type="PANTHER" id="PTHR10769:SF3">
    <property type="entry name" value="SMALL RIBOSOMAL SUBUNIT PROTEIN ES28"/>
    <property type="match status" value="1"/>
</dbReference>
<dbReference type="Pfam" id="PF01200">
    <property type="entry name" value="Ribosomal_S28e"/>
    <property type="match status" value="1"/>
</dbReference>
<dbReference type="SUPFAM" id="SSF50249">
    <property type="entry name" value="Nucleic acid-binding proteins"/>
    <property type="match status" value="1"/>
</dbReference>
<dbReference type="PROSITE" id="PS00961">
    <property type="entry name" value="RIBOSOMAL_S28E"/>
    <property type="match status" value="1"/>
</dbReference>
<evidence type="ECO:0000305" key="1"/>
<evidence type="ECO:0007829" key="2">
    <source>
        <dbReference type="PDB" id="8RW1"/>
    </source>
</evidence>
<sequence>MDTKTPVTLAKVIKVLGRTGSRGGVTQVRVEFLEDTTRTIVRNVKGPVREGDILVLMESEREARRLR</sequence>
<organism>
    <name type="scientific">Kluyveromyces lactis (strain ATCC 8585 / CBS 2359 / DSM 70799 / NBRC 1267 / NRRL Y-1140 / WM37)</name>
    <name type="common">Yeast</name>
    <name type="synonym">Candida sphaerica</name>
    <dbReference type="NCBI Taxonomy" id="284590"/>
    <lineage>
        <taxon>Eukaryota</taxon>
        <taxon>Fungi</taxon>
        <taxon>Dikarya</taxon>
        <taxon>Ascomycota</taxon>
        <taxon>Saccharomycotina</taxon>
        <taxon>Saccharomycetes</taxon>
        <taxon>Saccharomycetales</taxon>
        <taxon>Saccharomycetaceae</taxon>
        <taxon>Kluyveromyces</taxon>
    </lineage>
</organism>
<reference key="1">
    <citation type="journal article" date="1992" name="Yeast">
        <title>Structure and expression of the ABF1-regulated ribosomal protein S33 gene in Kluyveromyces.</title>
        <authorList>
            <person name="Hoekstra R."/>
            <person name="Ferreira P.M."/>
            <person name="Bootsman T.C."/>
            <person name="Mager W.H."/>
            <person name="Planta R.J."/>
        </authorList>
    </citation>
    <scope>NUCLEOTIDE SEQUENCE [MRNA]</scope>
</reference>
<reference key="2">
    <citation type="journal article" date="2004" name="Nature">
        <title>Genome evolution in yeasts.</title>
        <authorList>
            <person name="Dujon B."/>
            <person name="Sherman D."/>
            <person name="Fischer G."/>
            <person name="Durrens P."/>
            <person name="Casaregola S."/>
            <person name="Lafontaine I."/>
            <person name="de Montigny J."/>
            <person name="Marck C."/>
            <person name="Neuveglise C."/>
            <person name="Talla E."/>
            <person name="Goffard N."/>
            <person name="Frangeul L."/>
            <person name="Aigle M."/>
            <person name="Anthouard V."/>
            <person name="Babour A."/>
            <person name="Barbe V."/>
            <person name="Barnay S."/>
            <person name="Blanchin S."/>
            <person name="Beckerich J.-M."/>
            <person name="Beyne E."/>
            <person name="Bleykasten C."/>
            <person name="Boisrame A."/>
            <person name="Boyer J."/>
            <person name="Cattolico L."/>
            <person name="Confanioleri F."/>
            <person name="de Daruvar A."/>
            <person name="Despons L."/>
            <person name="Fabre E."/>
            <person name="Fairhead C."/>
            <person name="Ferry-Dumazet H."/>
            <person name="Groppi A."/>
            <person name="Hantraye F."/>
            <person name="Hennequin C."/>
            <person name="Jauniaux N."/>
            <person name="Joyet P."/>
            <person name="Kachouri R."/>
            <person name="Kerrest A."/>
            <person name="Koszul R."/>
            <person name="Lemaire M."/>
            <person name="Lesur I."/>
            <person name="Ma L."/>
            <person name="Muller H."/>
            <person name="Nicaud J.-M."/>
            <person name="Nikolski M."/>
            <person name="Oztas S."/>
            <person name="Ozier-Kalogeropoulos O."/>
            <person name="Pellenz S."/>
            <person name="Potier S."/>
            <person name="Richard G.-F."/>
            <person name="Straub M.-L."/>
            <person name="Suleau A."/>
            <person name="Swennen D."/>
            <person name="Tekaia F."/>
            <person name="Wesolowski-Louvel M."/>
            <person name="Westhof E."/>
            <person name="Wirth B."/>
            <person name="Zeniou-Meyer M."/>
            <person name="Zivanovic Y."/>
            <person name="Bolotin-Fukuhara M."/>
            <person name="Thierry A."/>
            <person name="Bouchier C."/>
            <person name="Caudron B."/>
            <person name="Scarpelli C."/>
            <person name="Gaillardin C."/>
            <person name="Weissenbach J."/>
            <person name="Wincker P."/>
            <person name="Souciet J.-L."/>
        </authorList>
    </citation>
    <scope>NUCLEOTIDE SEQUENCE [LARGE SCALE GENOMIC DNA]</scope>
    <source>
        <strain>ATCC 8585 / CBS 2359 / DSM 70799 / NBRC 1267 / NRRL Y-1140 / WM37</strain>
    </source>
</reference>
<protein>
    <recommendedName>
        <fullName evidence="1">Small ribosomal subunit protein eS28</fullName>
    </recommendedName>
    <alternativeName>
        <fullName>40S ribosomal protein S28</fullName>
    </alternativeName>
    <alternativeName>
        <fullName>S33</fullName>
    </alternativeName>
</protein>
<name>RS28_KLULA</name>